<keyword id="KW-0012">Acyltransferase</keyword>
<keyword id="KW-0963">Cytoplasm</keyword>
<keyword id="KW-0441">Lipid A biosynthesis</keyword>
<keyword id="KW-0444">Lipid biosynthesis</keyword>
<keyword id="KW-0443">Lipid metabolism</keyword>
<keyword id="KW-0677">Repeat</keyword>
<keyword id="KW-0808">Transferase</keyword>
<comment type="function">
    <text evidence="1">Involved in the biosynthesis of lipid A, a phosphorylated glycolipid that anchors the lipopolysaccharide to the outer membrane of the cell.</text>
</comment>
<comment type="catalytic activity">
    <reaction evidence="1">
        <text>a (3R)-hydroxyacyl-[ACP] + UDP-N-acetyl-alpha-D-glucosamine = a UDP-3-O-[(3R)-3-hydroxyacyl]-N-acetyl-alpha-D-glucosamine + holo-[ACP]</text>
        <dbReference type="Rhea" id="RHEA:67812"/>
        <dbReference type="Rhea" id="RHEA-COMP:9685"/>
        <dbReference type="Rhea" id="RHEA-COMP:9945"/>
        <dbReference type="ChEBI" id="CHEBI:57705"/>
        <dbReference type="ChEBI" id="CHEBI:64479"/>
        <dbReference type="ChEBI" id="CHEBI:78827"/>
        <dbReference type="ChEBI" id="CHEBI:173225"/>
        <dbReference type="EC" id="2.3.1.129"/>
    </reaction>
</comment>
<comment type="pathway">
    <text evidence="1">Glycolipid biosynthesis; lipid IV(A) biosynthesis; lipid IV(A) from (3R)-3-hydroxytetradecanoyl-[acyl-carrier-protein] and UDP-N-acetyl-alpha-D-glucosamine: step 1/6.</text>
</comment>
<comment type="subunit">
    <text evidence="1">Homotrimer.</text>
</comment>
<comment type="subcellular location">
    <subcellularLocation>
        <location evidence="1">Cytoplasm</location>
    </subcellularLocation>
</comment>
<comment type="similarity">
    <text evidence="1">Belongs to the transferase hexapeptide repeat family. LpxA subfamily.</text>
</comment>
<dbReference type="EC" id="2.3.1.129" evidence="1"/>
<dbReference type="EMBL" id="AE001363">
    <property type="protein sequence ID" value="AAD18789.1"/>
    <property type="molecule type" value="Genomic_DNA"/>
</dbReference>
<dbReference type="EMBL" id="AE002161">
    <property type="protein sequence ID" value="AAF37981.1"/>
    <property type="molecule type" value="Genomic_DNA"/>
</dbReference>
<dbReference type="EMBL" id="BA000008">
    <property type="protein sequence ID" value="BAA98857.1"/>
    <property type="molecule type" value="Genomic_DNA"/>
</dbReference>
<dbReference type="EMBL" id="AE009440">
    <property type="protein sequence ID" value="AAP98605.1"/>
    <property type="molecule type" value="Genomic_DNA"/>
</dbReference>
<dbReference type="PIR" id="C72051">
    <property type="entry name" value="C72051"/>
</dbReference>
<dbReference type="PIR" id="G86571">
    <property type="entry name" value="G86571"/>
</dbReference>
<dbReference type="RefSeq" id="NP_224846.1">
    <property type="nucleotide sequence ID" value="NC_000922.1"/>
</dbReference>
<dbReference type="RefSeq" id="WP_010883288.1">
    <property type="nucleotide sequence ID" value="NZ_LN847257.1"/>
</dbReference>
<dbReference type="SMR" id="Q9Z7Q4"/>
<dbReference type="STRING" id="406984.CPK_ORF00050"/>
<dbReference type="GeneID" id="45050700"/>
<dbReference type="KEGG" id="cpa:CP_0097"/>
<dbReference type="KEGG" id="cpj:lpxA"/>
<dbReference type="KEGG" id="cpn:CPn_0650"/>
<dbReference type="KEGG" id="cpt:CpB0676"/>
<dbReference type="PATRIC" id="fig|115713.3.peg.720"/>
<dbReference type="eggNOG" id="COG1043">
    <property type="taxonomic scope" value="Bacteria"/>
</dbReference>
<dbReference type="HOGENOM" id="CLU_061249_0_0_0"/>
<dbReference type="OrthoDB" id="9807278at2"/>
<dbReference type="UniPathway" id="UPA00359">
    <property type="reaction ID" value="UER00477"/>
</dbReference>
<dbReference type="Proteomes" id="UP000000583">
    <property type="component" value="Chromosome"/>
</dbReference>
<dbReference type="Proteomes" id="UP000000801">
    <property type="component" value="Chromosome"/>
</dbReference>
<dbReference type="GO" id="GO:0005737">
    <property type="term" value="C:cytoplasm"/>
    <property type="evidence" value="ECO:0007669"/>
    <property type="project" value="UniProtKB-SubCell"/>
</dbReference>
<dbReference type="GO" id="GO:0016020">
    <property type="term" value="C:membrane"/>
    <property type="evidence" value="ECO:0007669"/>
    <property type="project" value="GOC"/>
</dbReference>
<dbReference type="GO" id="GO:0008780">
    <property type="term" value="F:acyl-[acyl-carrier-protein]-UDP-N-acetylglucosamine O-acyltransferase activity"/>
    <property type="evidence" value="ECO:0007669"/>
    <property type="project" value="UniProtKB-UniRule"/>
</dbReference>
<dbReference type="GO" id="GO:0009245">
    <property type="term" value="P:lipid A biosynthetic process"/>
    <property type="evidence" value="ECO:0007669"/>
    <property type="project" value="UniProtKB-UniRule"/>
</dbReference>
<dbReference type="CDD" id="cd03351">
    <property type="entry name" value="LbH_UDP-GlcNAc_AT"/>
    <property type="match status" value="1"/>
</dbReference>
<dbReference type="Gene3D" id="2.160.10.10">
    <property type="entry name" value="Hexapeptide repeat proteins"/>
    <property type="match status" value="1"/>
</dbReference>
<dbReference type="Gene3D" id="1.20.1180.10">
    <property type="entry name" value="Udp N-acetylglucosamine O-acyltransferase, C-terminal domain"/>
    <property type="match status" value="1"/>
</dbReference>
<dbReference type="HAMAP" id="MF_00387">
    <property type="entry name" value="LpxA"/>
    <property type="match status" value="1"/>
</dbReference>
<dbReference type="InterPro" id="IPR029098">
    <property type="entry name" value="Acetyltransf_C"/>
</dbReference>
<dbReference type="InterPro" id="IPR037157">
    <property type="entry name" value="Acetyltransf_C_sf"/>
</dbReference>
<dbReference type="InterPro" id="IPR001451">
    <property type="entry name" value="Hexapep"/>
</dbReference>
<dbReference type="InterPro" id="IPR018357">
    <property type="entry name" value="Hexapep_transf_CS"/>
</dbReference>
<dbReference type="InterPro" id="IPR010137">
    <property type="entry name" value="Lipid_A_LpxA"/>
</dbReference>
<dbReference type="InterPro" id="IPR011004">
    <property type="entry name" value="Trimer_LpxA-like_sf"/>
</dbReference>
<dbReference type="NCBIfam" id="TIGR01852">
    <property type="entry name" value="lipid_A_lpxA"/>
    <property type="match status" value="1"/>
</dbReference>
<dbReference type="NCBIfam" id="NF003657">
    <property type="entry name" value="PRK05289.1"/>
    <property type="match status" value="1"/>
</dbReference>
<dbReference type="PANTHER" id="PTHR43480">
    <property type="entry name" value="ACYL-[ACYL-CARRIER-PROTEIN]--UDP-N-ACETYLGLUCOSAMINE O-ACYLTRANSFERASE"/>
    <property type="match status" value="1"/>
</dbReference>
<dbReference type="PANTHER" id="PTHR43480:SF1">
    <property type="entry name" value="ACYL-[ACYL-CARRIER-PROTEIN]--UDP-N-ACETYLGLUCOSAMINE O-ACYLTRANSFERASE, MITOCHONDRIAL-RELATED"/>
    <property type="match status" value="1"/>
</dbReference>
<dbReference type="Pfam" id="PF13720">
    <property type="entry name" value="Acetyltransf_11"/>
    <property type="match status" value="1"/>
</dbReference>
<dbReference type="Pfam" id="PF00132">
    <property type="entry name" value="Hexapep"/>
    <property type="match status" value="2"/>
</dbReference>
<dbReference type="PIRSF" id="PIRSF000456">
    <property type="entry name" value="UDP-GlcNAc_acltr"/>
    <property type="match status" value="1"/>
</dbReference>
<dbReference type="SUPFAM" id="SSF51161">
    <property type="entry name" value="Trimeric LpxA-like enzymes"/>
    <property type="match status" value="1"/>
</dbReference>
<dbReference type="PROSITE" id="PS00101">
    <property type="entry name" value="HEXAPEP_TRANSFERASES"/>
    <property type="match status" value="2"/>
</dbReference>
<reference key="1">
    <citation type="journal article" date="1999" name="Nat. Genet.">
        <title>Comparative genomes of Chlamydia pneumoniae and C. trachomatis.</title>
        <authorList>
            <person name="Kalman S."/>
            <person name="Mitchell W.P."/>
            <person name="Marathe R."/>
            <person name="Lammel C.J."/>
            <person name="Fan J."/>
            <person name="Hyman R.W."/>
            <person name="Olinger L."/>
            <person name="Grimwood J."/>
            <person name="Davis R.W."/>
            <person name="Stephens R.S."/>
        </authorList>
    </citation>
    <scope>NUCLEOTIDE SEQUENCE [LARGE SCALE GENOMIC DNA]</scope>
    <source>
        <strain>CWL029</strain>
    </source>
</reference>
<reference key="2">
    <citation type="journal article" date="2000" name="Nucleic Acids Res.">
        <title>Genome sequences of Chlamydia trachomatis MoPn and Chlamydia pneumoniae AR39.</title>
        <authorList>
            <person name="Read T.D."/>
            <person name="Brunham R.C."/>
            <person name="Shen C."/>
            <person name="Gill S.R."/>
            <person name="Heidelberg J.F."/>
            <person name="White O."/>
            <person name="Hickey E.K."/>
            <person name="Peterson J.D."/>
            <person name="Utterback T.R."/>
            <person name="Berry K.J."/>
            <person name="Bass S."/>
            <person name="Linher K.D."/>
            <person name="Weidman J.F."/>
            <person name="Khouri H.M."/>
            <person name="Craven B."/>
            <person name="Bowman C."/>
            <person name="Dodson R.J."/>
            <person name="Gwinn M.L."/>
            <person name="Nelson W.C."/>
            <person name="DeBoy R.T."/>
            <person name="Kolonay J.F."/>
            <person name="McClarty G."/>
            <person name="Salzberg S.L."/>
            <person name="Eisen J.A."/>
            <person name="Fraser C.M."/>
        </authorList>
    </citation>
    <scope>NUCLEOTIDE SEQUENCE [LARGE SCALE GENOMIC DNA]</scope>
    <source>
        <strain>AR39</strain>
    </source>
</reference>
<reference key="3">
    <citation type="journal article" date="2000" name="Nucleic Acids Res.">
        <title>Comparison of whole genome sequences of Chlamydia pneumoniae J138 from Japan and CWL029 from USA.</title>
        <authorList>
            <person name="Shirai M."/>
            <person name="Hirakawa H."/>
            <person name="Kimoto M."/>
            <person name="Tabuchi M."/>
            <person name="Kishi F."/>
            <person name="Ouchi K."/>
            <person name="Shiba T."/>
            <person name="Ishii K."/>
            <person name="Hattori M."/>
            <person name="Kuhara S."/>
            <person name="Nakazawa T."/>
        </authorList>
    </citation>
    <scope>NUCLEOTIDE SEQUENCE [LARGE SCALE GENOMIC DNA]</scope>
    <source>
        <strain>J138</strain>
    </source>
</reference>
<reference key="4">
    <citation type="submission" date="2002-05" db="EMBL/GenBank/DDBJ databases">
        <title>The genome sequence of Chlamydia pneumoniae TW183 and comparison with other Chlamydia strains based on whole genome sequence analysis.</title>
        <authorList>
            <person name="Geng M.M."/>
            <person name="Schuhmacher A."/>
            <person name="Muehldorfer I."/>
            <person name="Bensch K.W."/>
            <person name="Schaefer K.P."/>
            <person name="Schneider S."/>
            <person name="Pohl T."/>
            <person name="Essig A."/>
            <person name="Marre R."/>
            <person name="Melchers K."/>
        </authorList>
    </citation>
    <scope>NUCLEOTIDE SEQUENCE [LARGE SCALE GENOMIC DNA]</scope>
    <source>
        <strain>TW-183</strain>
    </source>
</reference>
<gene>
    <name evidence="1" type="primary">lpxA</name>
    <name type="ordered locus">CPn_0650</name>
    <name type="ordered locus">CP_0097</name>
    <name type="ordered locus">CpB0676</name>
</gene>
<protein>
    <recommendedName>
        <fullName evidence="1">Acyl-[acyl-carrier-protein]--UDP-N-acetylglucosamine O-acyltransferase</fullName>
        <shortName evidence="1">UDP-N-acetylglucosamine acyltransferase</shortName>
        <ecNumber evidence="1">2.3.1.129</ecNumber>
    </recommendedName>
</protein>
<name>LPXA_CHLPN</name>
<feature type="chain" id="PRO_0000188042" description="Acyl-[acyl-carrier-protein]--UDP-N-acetylglucosamine O-acyltransferase">
    <location>
        <begin position="1"/>
        <end position="279"/>
    </location>
</feature>
<sequence length="279" mass="30345">MASIHPTAIIEPGAKIGKDVVIEPYVVIKATVTLCDNVVVKSYAYIDGNTTIGKGTTIWPSAMIGNKPQDLKYQGEKTYVTIGENCEIREFAIITSSTFEGTTVSIGNNCLIMPWAHVAHNCTIGNNVVLSNHAQLAGHVQVGDYAILGGMVGVHQFVRIGAHAMVGALSGIRRDVPPYTIGSGNPYQLAGINKVGLQRRQVPFATRLALIKAFKKIYRADGCFFESLEETLEEYGDIPEVKNFIEFCQSPSKRGIERSIDKQALEEESADKEGVLIES</sequence>
<evidence type="ECO:0000255" key="1">
    <source>
        <dbReference type="HAMAP-Rule" id="MF_00387"/>
    </source>
</evidence>
<proteinExistence type="inferred from homology"/>
<accession>Q9Z7Q4</accession>
<organism>
    <name type="scientific">Chlamydia pneumoniae</name>
    <name type="common">Chlamydophila pneumoniae</name>
    <dbReference type="NCBI Taxonomy" id="83558"/>
    <lineage>
        <taxon>Bacteria</taxon>
        <taxon>Pseudomonadati</taxon>
        <taxon>Chlamydiota</taxon>
        <taxon>Chlamydiia</taxon>
        <taxon>Chlamydiales</taxon>
        <taxon>Chlamydiaceae</taxon>
        <taxon>Chlamydia/Chlamydophila group</taxon>
        <taxon>Chlamydia</taxon>
    </lineage>
</organism>